<gene>
    <name evidence="1" type="primary">atpH</name>
    <name type="ordered locus">BMASAVP1_A3358</name>
</gene>
<feature type="chain" id="PRO_1000184665" description="ATP synthase subunit delta">
    <location>
        <begin position="1"/>
        <end position="179"/>
    </location>
</feature>
<evidence type="ECO:0000255" key="1">
    <source>
        <dbReference type="HAMAP-Rule" id="MF_01416"/>
    </source>
</evidence>
<dbReference type="EMBL" id="CP000526">
    <property type="protein sequence ID" value="ABM52927.1"/>
    <property type="molecule type" value="Genomic_DNA"/>
</dbReference>
<dbReference type="RefSeq" id="WP_004204842.1">
    <property type="nucleotide sequence ID" value="NC_008785.1"/>
</dbReference>
<dbReference type="SMR" id="A1V8T4"/>
<dbReference type="KEGG" id="bmv:BMASAVP1_A3358"/>
<dbReference type="HOGENOM" id="CLU_085114_3_0_4"/>
<dbReference type="GO" id="GO:0005886">
    <property type="term" value="C:plasma membrane"/>
    <property type="evidence" value="ECO:0007669"/>
    <property type="project" value="UniProtKB-SubCell"/>
</dbReference>
<dbReference type="GO" id="GO:0045259">
    <property type="term" value="C:proton-transporting ATP synthase complex"/>
    <property type="evidence" value="ECO:0007669"/>
    <property type="project" value="UniProtKB-KW"/>
</dbReference>
<dbReference type="GO" id="GO:0046933">
    <property type="term" value="F:proton-transporting ATP synthase activity, rotational mechanism"/>
    <property type="evidence" value="ECO:0007669"/>
    <property type="project" value="UniProtKB-UniRule"/>
</dbReference>
<dbReference type="Gene3D" id="1.10.520.20">
    <property type="entry name" value="N-terminal domain of the delta subunit of the F1F0-ATP synthase"/>
    <property type="match status" value="1"/>
</dbReference>
<dbReference type="HAMAP" id="MF_01416">
    <property type="entry name" value="ATP_synth_delta_bact"/>
    <property type="match status" value="1"/>
</dbReference>
<dbReference type="InterPro" id="IPR026015">
    <property type="entry name" value="ATP_synth_OSCP/delta_N_sf"/>
</dbReference>
<dbReference type="InterPro" id="IPR000711">
    <property type="entry name" value="ATPase_OSCP/dsu"/>
</dbReference>
<dbReference type="NCBIfam" id="TIGR01145">
    <property type="entry name" value="ATP_synt_delta"/>
    <property type="match status" value="1"/>
</dbReference>
<dbReference type="NCBIfam" id="NF004402">
    <property type="entry name" value="PRK05758.2-2"/>
    <property type="match status" value="1"/>
</dbReference>
<dbReference type="PANTHER" id="PTHR11910">
    <property type="entry name" value="ATP SYNTHASE DELTA CHAIN"/>
    <property type="match status" value="1"/>
</dbReference>
<dbReference type="Pfam" id="PF00213">
    <property type="entry name" value="OSCP"/>
    <property type="match status" value="1"/>
</dbReference>
<dbReference type="PRINTS" id="PR00125">
    <property type="entry name" value="ATPASEDELTA"/>
</dbReference>
<dbReference type="SUPFAM" id="SSF47928">
    <property type="entry name" value="N-terminal domain of the delta subunit of the F1F0-ATP synthase"/>
    <property type="match status" value="1"/>
</dbReference>
<protein>
    <recommendedName>
        <fullName evidence="1">ATP synthase subunit delta</fullName>
    </recommendedName>
    <alternativeName>
        <fullName evidence="1">ATP synthase F(1) sector subunit delta</fullName>
    </alternativeName>
    <alternativeName>
        <fullName evidence="1">F-type ATPase subunit delta</fullName>
        <shortName evidence="1">F-ATPase subunit delta</shortName>
    </alternativeName>
</protein>
<organism>
    <name type="scientific">Burkholderia mallei (strain SAVP1)</name>
    <dbReference type="NCBI Taxonomy" id="320388"/>
    <lineage>
        <taxon>Bacteria</taxon>
        <taxon>Pseudomonadati</taxon>
        <taxon>Pseudomonadota</taxon>
        <taxon>Betaproteobacteria</taxon>
        <taxon>Burkholderiales</taxon>
        <taxon>Burkholderiaceae</taxon>
        <taxon>Burkholderia</taxon>
        <taxon>pseudomallei group</taxon>
    </lineage>
</organism>
<comment type="function">
    <text evidence="1">F(1)F(0) ATP synthase produces ATP from ADP in the presence of a proton or sodium gradient. F-type ATPases consist of two structural domains, F(1) containing the extramembraneous catalytic core and F(0) containing the membrane proton channel, linked together by a central stalk and a peripheral stalk. During catalysis, ATP synthesis in the catalytic domain of F(1) is coupled via a rotary mechanism of the central stalk subunits to proton translocation.</text>
</comment>
<comment type="function">
    <text evidence="1">This protein is part of the stalk that links CF(0) to CF(1). It either transmits conformational changes from CF(0) to CF(1) or is implicated in proton conduction.</text>
</comment>
<comment type="subunit">
    <text evidence="1">F-type ATPases have 2 components, F(1) - the catalytic core - and F(0) - the membrane proton channel. F(1) has five subunits: alpha(3), beta(3), gamma(1), delta(1), epsilon(1). F(0) has three main subunits: a(1), b(2) and c(10-14). The alpha and beta chains form an alternating ring which encloses part of the gamma chain. F(1) is attached to F(0) by a central stalk formed by the gamma and epsilon chains, while a peripheral stalk is formed by the delta and b chains.</text>
</comment>
<comment type="subcellular location">
    <subcellularLocation>
        <location evidence="1">Cell inner membrane</location>
        <topology evidence="1">Peripheral membrane protein</topology>
    </subcellularLocation>
</comment>
<comment type="similarity">
    <text evidence="1">Belongs to the ATPase delta chain family.</text>
</comment>
<keyword id="KW-0066">ATP synthesis</keyword>
<keyword id="KW-0997">Cell inner membrane</keyword>
<keyword id="KW-1003">Cell membrane</keyword>
<keyword id="KW-0139">CF(1)</keyword>
<keyword id="KW-0375">Hydrogen ion transport</keyword>
<keyword id="KW-0406">Ion transport</keyword>
<keyword id="KW-0472">Membrane</keyword>
<keyword id="KW-0813">Transport</keyword>
<accession>A1V8T4</accession>
<name>ATPD_BURMS</name>
<proteinExistence type="inferred from homology"/>
<sequence>MAELATIARPYAEALFRVAEGGDISAWSTLVQELAQVAQLPEVLSVASSPKVSRTQVAELLLAALKSPLASGAQAKNFVQMLVDNHRIALSPEIAVQFEALKNAREGAADVQIVSAFPLEGAQLAELVTSLERKFKRKLKPAVEVDSSLIGGVRVTVGDEVLDTSVRARLAGMQAALTA</sequence>
<reference key="1">
    <citation type="journal article" date="2010" name="Genome Biol. Evol.">
        <title>Continuing evolution of Burkholderia mallei through genome reduction and large-scale rearrangements.</title>
        <authorList>
            <person name="Losada L."/>
            <person name="Ronning C.M."/>
            <person name="DeShazer D."/>
            <person name="Woods D."/>
            <person name="Fedorova N."/>
            <person name="Kim H.S."/>
            <person name="Shabalina S.A."/>
            <person name="Pearson T.R."/>
            <person name="Brinkac L."/>
            <person name="Tan P."/>
            <person name="Nandi T."/>
            <person name="Crabtree J."/>
            <person name="Badger J."/>
            <person name="Beckstrom-Sternberg S."/>
            <person name="Saqib M."/>
            <person name="Schutzer S.E."/>
            <person name="Keim P."/>
            <person name="Nierman W.C."/>
        </authorList>
    </citation>
    <scope>NUCLEOTIDE SEQUENCE [LARGE SCALE GENOMIC DNA]</scope>
    <source>
        <strain>SAVP1</strain>
    </source>
</reference>